<reference key="1">
    <citation type="journal article" date="2009" name="PLoS Pathog.">
        <title>Genomic evidence for the evolution of Streptococcus equi: host restriction, increased virulence, and genetic exchange with human pathogens.</title>
        <authorList>
            <person name="Holden M.T.G."/>
            <person name="Heather Z."/>
            <person name="Paillot R."/>
            <person name="Steward K.F."/>
            <person name="Webb K."/>
            <person name="Ainslie F."/>
            <person name="Jourdan T."/>
            <person name="Bason N.C."/>
            <person name="Holroyd N.E."/>
            <person name="Mungall K."/>
            <person name="Quail M.A."/>
            <person name="Sanders M."/>
            <person name="Simmonds M."/>
            <person name="Willey D."/>
            <person name="Brooks K."/>
            <person name="Aanensen D.M."/>
            <person name="Spratt B.G."/>
            <person name="Jolley K.A."/>
            <person name="Maiden M.C.J."/>
            <person name="Kehoe M."/>
            <person name="Chanter N."/>
            <person name="Bentley S.D."/>
            <person name="Robinson C."/>
            <person name="Maskell D.J."/>
            <person name="Parkhill J."/>
            <person name="Waller A.S."/>
        </authorList>
    </citation>
    <scope>NUCLEOTIDE SEQUENCE [LARGE SCALE GENOMIC DNA]</scope>
    <source>
        <strain>H70</strain>
    </source>
</reference>
<proteinExistence type="inferred from homology"/>
<name>RS11_STRS7</name>
<dbReference type="EMBL" id="FM204884">
    <property type="protein sequence ID" value="CAW97688.1"/>
    <property type="molecule type" value="Genomic_DNA"/>
</dbReference>
<dbReference type="SMR" id="C0ME30"/>
<dbReference type="KEGG" id="seq:SZO_00750"/>
<dbReference type="eggNOG" id="COG0100">
    <property type="taxonomic scope" value="Bacteria"/>
</dbReference>
<dbReference type="HOGENOM" id="CLU_072439_5_0_9"/>
<dbReference type="Proteomes" id="UP000001368">
    <property type="component" value="Chromosome"/>
</dbReference>
<dbReference type="GO" id="GO:1990904">
    <property type="term" value="C:ribonucleoprotein complex"/>
    <property type="evidence" value="ECO:0007669"/>
    <property type="project" value="UniProtKB-KW"/>
</dbReference>
<dbReference type="GO" id="GO:0005840">
    <property type="term" value="C:ribosome"/>
    <property type="evidence" value="ECO:0007669"/>
    <property type="project" value="UniProtKB-KW"/>
</dbReference>
<dbReference type="GO" id="GO:0019843">
    <property type="term" value="F:rRNA binding"/>
    <property type="evidence" value="ECO:0007669"/>
    <property type="project" value="UniProtKB-UniRule"/>
</dbReference>
<dbReference type="GO" id="GO:0003735">
    <property type="term" value="F:structural constituent of ribosome"/>
    <property type="evidence" value="ECO:0007669"/>
    <property type="project" value="InterPro"/>
</dbReference>
<dbReference type="GO" id="GO:0006412">
    <property type="term" value="P:translation"/>
    <property type="evidence" value="ECO:0007669"/>
    <property type="project" value="UniProtKB-UniRule"/>
</dbReference>
<dbReference type="FunFam" id="3.30.420.80:FF:000001">
    <property type="entry name" value="30S ribosomal protein S11"/>
    <property type="match status" value="1"/>
</dbReference>
<dbReference type="Gene3D" id="3.30.420.80">
    <property type="entry name" value="Ribosomal protein S11"/>
    <property type="match status" value="1"/>
</dbReference>
<dbReference type="HAMAP" id="MF_01310">
    <property type="entry name" value="Ribosomal_uS11"/>
    <property type="match status" value="1"/>
</dbReference>
<dbReference type="InterPro" id="IPR001971">
    <property type="entry name" value="Ribosomal_uS11"/>
</dbReference>
<dbReference type="InterPro" id="IPR019981">
    <property type="entry name" value="Ribosomal_uS11_bac-type"/>
</dbReference>
<dbReference type="InterPro" id="IPR018102">
    <property type="entry name" value="Ribosomal_uS11_CS"/>
</dbReference>
<dbReference type="InterPro" id="IPR036967">
    <property type="entry name" value="Ribosomal_uS11_sf"/>
</dbReference>
<dbReference type="NCBIfam" id="NF003698">
    <property type="entry name" value="PRK05309.1"/>
    <property type="match status" value="1"/>
</dbReference>
<dbReference type="NCBIfam" id="TIGR03632">
    <property type="entry name" value="uS11_bact"/>
    <property type="match status" value="1"/>
</dbReference>
<dbReference type="PANTHER" id="PTHR11759">
    <property type="entry name" value="40S RIBOSOMAL PROTEIN S14/30S RIBOSOMAL PROTEIN S11"/>
    <property type="match status" value="1"/>
</dbReference>
<dbReference type="Pfam" id="PF00411">
    <property type="entry name" value="Ribosomal_S11"/>
    <property type="match status" value="1"/>
</dbReference>
<dbReference type="PIRSF" id="PIRSF002131">
    <property type="entry name" value="Ribosomal_S11"/>
    <property type="match status" value="1"/>
</dbReference>
<dbReference type="SUPFAM" id="SSF53137">
    <property type="entry name" value="Translational machinery components"/>
    <property type="match status" value="1"/>
</dbReference>
<dbReference type="PROSITE" id="PS00054">
    <property type="entry name" value="RIBOSOMAL_S11"/>
    <property type="match status" value="1"/>
</dbReference>
<sequence>MAKPTRKRRVKKNIESGVAHIHATFNNTIVMITDVHGNALAWSSAGALGFKGSRKSTPFAAQMAAEAAAKSAQEHGLKTVEVTVKGPGSGRESAIRALAAAGLEVTAIRDVTPVPHNGARPPKRRRV</sequence>
<comment type="function">
    <text evidence="1">Located on the platform of the 30S subunit, it bridges several disparate RNA helices of the 16S rRNA. Forms part of the Shine-Dalgarno cleft in the 70S ribosome.</text>
</comment>
<comment type="subunit">
    <text evidence="1">Part of the 30S ribosomal subunit. Interacts with proteins S7 and S18. Binds to IF-3.</text>
</comment>
<comment type="similarity">
    <text evidence="1">Belongs to the universal ribosomal protein uS11 family.</text>
</comment>
<protein>
    <recommendedName>
        <fullName evidence="1">Small ribosomal subunit protein uS11</fullName>
    </recommendedName>
    <alternativeName>
        <fullName evidence="2">30S ribosomal protein S11</fullName>
    </alternativeName>
</protein>
<evidence type="ECO:0000255" key="1">
    <source>
        <dbReference type="HAMAP-Rule" id="MF_01310"/>
    </source>
</evidence>
<evidence type="ECO:0000305" key="2"/>
<organism>
    <name type="scientific">Streptococcus equi subsp. zooepidemicus (strain H70)</name>
    <dbReference type="NCBI Taxonomy" id="553483"/>
    <lineage>
        <taxon>Bacteria</taxon>
        <taxon>Bacillati</taxon>
        <taxon>Bacillota</taxon>
        <taxon>Bacilli</taxon>
        <taxon>Lactobacillales</taxon>
        <taxon>Streptococcaceae</taxon>
        <taxon>Streptococcus</taxon>
    </lineage>
</organism>
<feature type="chain" id="PRO_1000214374" description="Small ribosomal subunit protein uS11">
    <location>
        <begin position="1"/>
        <end position="127"/>
    </location>
</feature>
<keyword id="KW-0687">Ribonucleoprotein</keyword>
<keyword id="KW-0689">Ribosomal protein</keyword>
<keyword id="KW-0694">RNA-binding</keyword>
<keyword id="KW-0699">rRNA-binding</keyword>
<accession>C0ME30</accession>
<gene>
    <name evidence="1" type="primary">rpsK</name>
    <name type="ordered locus">SZO_00750</name>
</gene>